<protein>
    <recommendedName>
        <fullName>FK506-binding protein 3</fullName>
        <ecNumber>5.2.1.8</ecNumber>
    </recommendedName>
    <alternativeName>
        <fullName>Peptidyl-prolyl cis-trans isomerase</fullName>
        <shortName>PPIase</shortName>
    </alternativeName>
    <alternativeName>
        <fullName>Rotamase</fullName>
    </alternativeName>
</protein>
<reference key="1">
    <citation type="journal article" date="2004" name="Science">
        <title>The Ashbya gossypii genome as a tool for mapping the ancient Saccharomyces cerevisiae genome.</title>
        <authorList>
            <person name="Dietrich F.S."/>
            <person name="Voegeli S."/>
            <person name="Brachat S."/>
            <person name="Lerch A."/>
            <person name="Gates K."/>
            <person name="Steiner S."/>
            <person name="Mohr C."/>
            <person name="Poehlmann R."/>
            <person name="Luedi P."/>
            <person name="Choi S."/>
            <person name="Wing R.A."/>
            <person name="Flavier A."/>
            <person name="Gaffney T.D."/>
            <person name="Philippsen P."/>
        </authorList>
    </citation>
    <scope>NUCLEOTIDE SEQUENCE [LARGE SCALE GENOMIC DNA]</scope>
    <source>
        <strain>ATCC 10895 / CBS 109.51 / FGSC 9923 / NRRL Y-1056</strain>
    </source>
</reference>
<reference key="2">
    <citation type="journal article" date="2013" name="G3 (Bethesda)">
        <title>Genomes of Ashbya fungi isolated from insects reveal four mating-type loci, numerous translocations, lack of transposons, and distinct gene duplications.</title>
        <authorList>
            <person name="Dietrich F.S."/>
            <person name="Voegeli S."/>
            <person name="Kuo S."/>
            <person name="Philippsen P."/>
        </authorList>
    </citation>
    <scope>GENOME REANNOTATION</scope>
    <scope>SEQUENCE REVISION TO 4-6; 18-20; 233; 255 AND 263</scope>
    <source>
        <strain>ATCC 10895 / CBS 109.51 / FGSC 9923 / NRRL Y-1056</strain>
    </source>
</reference>
<dbReference type="EC" id="5.2.1.8"/>
<dbReference type="EMBL" id="AE016818">
    <property type="protein sequence ID" value="AAS52833.2"/>
    <property type="molecule type" value="Genomic_DNA"/>
</dbReference>
<dbReference type="RefSeq" id="NP_985009.2">
    <property type="nucleotide sequence ID" value="NM_210363.2"/>
</dbReference>
<dbReference type="SMR" id="Q756V1"/>
<dbReference type="FunCoup" id="Q756V1">
    <property type="interactions" value="596"/>
</dbReference>
<dbReference type="STRING" id="284811.Q756V1"/>
<dbReference type="EnsemblFungi" id="AAS52833">
    <property type="protein sequence ID" value="AAS52833"/>
    <property type="gene ID" value="AGOS_AER150W"/>
</dbReference>
<dbReference type="GeneID" id="4621215"/>
<dbReference type="KEGG" id="ago:AGOS_AER150W"/>
<dbReference type="eggNOG" id="KOG0552">
    <property type="taxonomic scope" value="Eukaryota"/>
</dbReference>
<dbReference type="HOGENOM" id="CLU_022297_3_1_1"/>
<dbReference type="InParanoid" id="Q756V1"/>
<dbReference type="OMA" id="TLVKIHY"/>
<dbReference type="OrthoDB" id="77911at2759"/>
<dbReference type="Proteomes" id="UP000000591">
    <property type="component" value="Chromosome V"/>
</dbReference>
<dbReference type="GO" id="GO:0000785">
    <property type="term" value="C:chromatin"/>
    <property type="evidence" value="ECO:0000318"/>
    <property type="project" value="GO_Central"/>
</dbReference>
<dbReference type="GO" id="GO:0005730">
    <property type="term" value="C:nucleolus"/>
    <property type="evidence" value="ECO:0000318"/>
    <property type="project" value="GO_Central"/>
</dbReference>
<dbReference type="GO" id="GO:0003755">
    <property type="term" value="F:peptidyl-prolyl cis-trans isomerase activity"/>
    <property type="evidence" value="ECO:0000318"/>
    <property type="project" value="GO_Central"/>
</dbReference>
<dbReference type="FunFam" id="3.10.50.40:FF:000006">
    <property type="entry name" value="Peptidyl-prolyl cis-trans isomerase"/>
    <property type="match status" value="1"/>
</dbReference>
<dbReference type="Gene3D" id="3.10.50.40">
    <property type="match status" value="1"/>
</dbReference>
<dbReference type="Gene3D" id="2.60.120.340">
    <property type="entry name" value="Nucleoplasmin core domain"/>
    <property type="match status" value="1"/>
</dbReference>
<dbReference type="InterPro" id="IPR041232">
    <property type="entry name" value="NPL"/>
</dbReference>
<dbReference type="InterPro" id="IPR046357">
    <property type="entry name" value="PPIase_dom_sf"/>
</dbReference>
<dbReference type="InterPro" id="IPR001179">
    <property type="entry name" value="PPIase_FKBP_dom"/>
</dbReference>
<dbReference type="InterPro" id="IPR023566">
    <property type="entry name" value="PPIase_Fpr3/Fpr4-like"/>
</dbReference>
<dbReference type="PANTHER" id="PTHR43811:SF19">
    <property type="entry name" value="39 KDA FK506-BINDING NUCLEAR PROTEIN"/>
    <property type="match status" value="1"/>
</dbReference>
<dbReference type="PANTHER" id="PTHR43811">
    <property type="entry name" value="FKBP-TYPE PEPTIDYL-PROLYL CIS-TRANS ISOMERASE FKPA"/>
    <property type="match status" value="1"/>
</dbReference>
<dbReference type="Pfam" id="PF00254">
    <property type="entry name" value="FKBP_C"/>
    <property type="match status" value="1"/>
</dbReference>
<dbReference type="Pfam" id="PF17800">
    <property type="entry name" value="NPL"/>
    <property type="match status" value="1"/>
</dbReference>
<dbReference type="PIRSF" id="PIRSF001473">
    <property type="entry name" value="FK506-bp_FPR3"/>
    <property type="match status" value="1"/>
</dbReference>
<dbReference type="SUPFAM" id="SSF54534">
    <property type="entry name" value="FKBP-like"/>
    <property type="match status" value="1"/>
</dbReference>
<dbReference type="PROSITE" id="PS50059">
    <property type="entry name" value="FKBP_PPIASE"/>
    <property type="match status" value="1"/>
</dbReference>
<gene>
    <name type="primary">FPR3</name>
    <name type="ordered locus">AER150W</name>
</gene>
<organism>
    <name type="scientific">Eremothecium gossypii (strain ATCC 10895 / CBS 109.51 / FGSC 9923 / NRRL Y-1056)</name>
    <name type="common">Yeast</name>
    <name type="synonym">Ashbya gossypii</name>
    <dbReference type="NCBI Taxonomy" id="284811"/>
    <lineage>
        <taxon>Eukaryota</taxon>
        <taxon>Fungi</taxon>
        <taxon>Dikarya</taxon>
        <taxon>Ascomycota</taxon>
        <taxon>Saccharomycotina</taxon>
        <taxon>Saccharomycetes</taxon>
        <taxon>Saccharomycetales</taxon>
        <taxon>Saccharomycetaceae</taxon>
        <taxon>Eremothecium</taxon>
    </lineage>
</organism>
<evidence type="ECO:0000250" key="1"/>
<evidence type="ECO:0000255" key="2">
    <source>
        <dbReference type="PROSITE-ProRule" id="PRU00277"/>
    </source>
</evidence>
<evidence type="ECO:0000256" key="3">
    <source>
        <dbReference type="SAM" id="MobiDB-lite"/>
    </source>
</evidence>
<evidence type="ECO:0000305" key="4"/>
<proteinExistence type="inferred from homology"/>
<comment type="function">
    <text evidence="1">PPIases accelerate the folding of proteins. It catalyzes the cis-trans isomerization of proline imidic peptide bonds in oligopeptides (By similarity).</text>
</comment>
<comment type="catalytic activity">
    <reaction>
        <text>[protein]-peptidylproline (omega=180) = [protein]-peptidylproline (omega=0)</text>
        <dbReference type="Rhea" id="RHEA:16237"/>
        <dbReference type="Rhea" id="RHEA-COMP:10747"/>
        <dbReference type="Rhea" id="RHEA-COMP:10748"/>
        <dbReference type="ChEBI" id="CHEBI:83833"/>
        <dbReference type="ChEBI" id="CHEBI:83834"/>
        <dbReference type="EC" id="5.2.1.8"/>
    </reaction>
</comment>
<comment type="activity regulation">
    <text evidence="1">Inhibited by both FK506 and rapamycin.</text>
</comment>
<comment type="subcellular location">
    <subcellularLocation>
        <location evidence="1">Nucleus</location>
        <location evidence="1">Nucleolus</location>
    </subcellularLocation>
</comment>
<comment type="similarity">
    <text evidence="4">Belongs to the FKBP-type PPIase family. FKBP3/4 subfamily.</text>
</comment>
<feature type="chain" id="PRO_0000233073" description="FK506-binding protein 3">
    <location>
        <begin position="1"/>
        <end position="417"/>
    </location>
</feature>
<feature type="domain" description="PPIase FKBP-type" evidence="2">
    <location>
        <begin position="331"/>
        <end position="417"/>
    </location>
</feature>
<feature type="region of interest" description="Disordered" evidence="3">
    <location>
        <begin position="42"/>
        <end position="129"/>
    </location>
</feature>
<feature type="region of interest" description="Disordered" evidence="3">
    <location>
        <begin position="191"/>
        <end position="307"/>
    </location>
</feature>
<feature type="compositionally biased region" description="Acidic residues" evidence="3">
    <location>
        <begin position="61"/>
        <end position="84"/>
    </location>
</feature>
<feature type="compositionally biased region" description="Acidic residues" evidence="3">
    <location>
        <begin position="99"/>
        <end position="120"/>
    </location>
</feature>
<feature type="compositionally biased region" description="Acidic residues" evidence="3">
    <location>
        <begin position="197"/>
        <end position="222"/>
    </location>
</feature>
<feature type="compositionally biased region" description="Basic and acidic residues" evidence="3">
    <location>
        <begin position="236"/>
        <end position="249"/>
    </location>
</feature>
<feature type="compositionally biased region" description="Basic and acidic residues" evidence="3">
    <location>
        <begin position="256"/>
        <end position="307"/>
    </location>
</feature>
<sequence>MSELLPMATYNLNIEPYSPTPAIDVTVPVTVRLTMAAIDPESLDDEKKPATLRLIRRNPAFDDEDDLLADSEEEEEEESEEESEPETKKPKKKAAKAESEEEDSEEEDSEGEDSDDEFEEFVLATLSPESQYQQTLDLVISPEEEVQFVVTGSYRVSLSGNYVQHPYDDEDSYDEDHEGCGENCACDDDHEGCGDDCACDDDSDYDLTPDEEDILDMEDASDVEAKIEELVEQEEANEKRKADEDEPKAAKKQKKDQKDTKKDAKKDAKKDQKDQKDAKKDAKKEKKVEFKKDLEEGPSKKKDDKPKTKILEGGVVIEDRVVGSGKAAKKGARVGMRYIGKLKNGKVFDKNTSGKPFVFKLGHGEVIKGWDIGVAGMAVGGERRIVIPAAYAYGKQALPGIPANSELTFDVKLVSLK</sequence>
<accession>Q756V1</accession>
<keyword id="KW-0413">Isomerase</keyword>
<keyword id="KW-0539">Nucleus</keyword>
<keyword id="KW-1185">Reference proteome</keyword>
<keyword id="KW-0697">Rotamase</keyword>
<name>FKBP3_EREGS</name>